<reference key="1">
    <citation type="submission" date="1998-02" db="EMBL/GenBank/DDBJ databases">
        <authorList>
            <person name="Loriaux A."/>
            <person name="Brans A."/>
            <person name="Dusart J."/>
        </authorList>
    </citation>
    <scope>NUCLEOTIDE SEQUENCE [GENOMIC DNA]</scope>
    <source>
        <strain>A3(2) / NRRL B-16638</strain>
    </source>
</reference>
<reference key="2">
    <citation type="journal article" date="2002" name="Nature">
        <title>Complete genome sequence of the model actinomycete Streptomyces coelicolor A3(2).</title>
        <authorList>
            <person name="Bentley S.D."/>
            <person name="Chater K.F."/>
            <person name="Cerdeno-Tarraga A.-M."/>
            <person name="Challis G.L."/>
            <person name="Thomson N.R."/>
            <person name="James K.D."/>
            <person name="Harris D.E."/>
            <person name="Quail M.A."/>
            <person name="Kieser H."/>
            <person name="Harper D."/>
            <person name="Bateman A."/>
            <person name="Brown S."/>
            <person name="Chandra G."/>
            <person name="Chen C.W."/>
            <person name="Collins M."/>
            <person name="Cronin A."/>
            <person name="Fraser A."/>
            <person name="Goble A."/>
            <person name="Hidalgo J."/>
            <person name="Hornsby T."/>
            <person name="Howarth S."/>
            <person name="Huang C.-H."/>
            <person name="Kieser T."/>
            <person name="Larke L."/>
            <person name="Murphy L.D."/>
            <person name="Oliver K."/>
            <person name="O'Neil S."/>
            <person name="Rabbinowitsch E."/>
            <person name="Rajandream M.A."/>
            <person name="Rutherford K.M."/>
            <person name="Rutter S."/>
            <person name="Seeger K."/>
            <person name="Saunders D."/>
            <person name="Sharp S."/>
            <person name="Squares R."/>
            <person name="Squares S."/>
            <person name="Taylor K."/>
            <person name="Warren T."/>
            <person name="Wietzorrek A."/>
            <person name="Woodward J.R."/>
            <person name="Barrell B.G."/>
            <person name="Parkhill J."/>
            <person name="Hopwood D.A."/>
        </authorList>
    </citation>
    <scope>NUCLEOTIDE SEQUENCE [LARGE SCALE GENOMIC DNA]</scope>
    <source>
        <strain>ATCC BAA-471 / A3(2) / M145</strain>
    </source>
</reference>
<accession>P46790</accession>
<accession>Q9L0C3</accession>
<protein>
    <recommendedName>
        <fullName evidence="1">Small ribosomal subunit protein uS5</fullName>
    </recommendedName>
    <alternativeName>
        <fullName evidence="3">30S ribosomal protein S5</fullName>
    </alternativeName>
</protein>
<gene>
    <name evidence="1" type="primary">rpsE</name>
    <name type="ordered locus">SCO4719</name>
    <name type="ORF">SCD31.44</name>
</gene>
<sequence>MAGPQRRGSGAGGGERRDRKGRDGGAGAAEKTAYVERVVAINRVAKVVKGGRRFSFTALVVVGDGDGTVGVGYGKAKEVPAAIAKGVEEAKKHFFKVPRIQGTIPHPIQGEKAAGVVLLKPASPGTGVIAGGPVRAVLECAGIHDVLSKSLGSDNQINIVHATVEALKGLQRPEEIAARRGLPLEDVAPAALLRARAGAGA</sequence>
<comment type="function">
    <text evidence="1">With S4 and S12 plays an important role in translational accuracy.</text>
</comment>
<comment type="function">
    <text evidence="1">Located at the back of the 30S subunit body where it stabilizes the conformation of the head with respect to the body.</text>
</comment>
<comment type="subunit">
    <text evidence="1">Part of the 30S ribosomal subunit. Contacts proteins S4 and S8.</text>
</comment>
<comment type="domain">
    <text>The N-terminal domain interacts with the head of the 30S subunit; the C-terminal domain interacts with the body and contacts protein S4. The interaction surface between S4 and S5 is involved in control of translational fidelity.</text>
</comment>
<comment type="similarity">
    <text evidence="1">Belongs to the universal ribosomal protein uS5 family.</text>
</comment>
<feature type="chain" id="PRO_0000131604" description="Small ribosomal subunit protein uS5">
    <location>
        <begin position="1"/>
        <end position="201"/>
    </location>
</feature>
<feature type="domain" description="S5 DRBM" evidence="1">
    <location>
        <begin position="34"/>
        <end position="97"/>
    </location>
</feature>
<feature type="region of interest" description="Disordered" evidence="2">
    <location>
        <begin position="1"/>
        <end position="28"/>
    </location>
</feature>
<feature type="compositionally biased region" description="Basic and acidic residues" evidence="2">
    <location>
        <begin position="14"/>
        <end position="23"/>
    </location>
</feature>
<feature type="sequence conflict" description="In Ref. 1; CAA58136." evidence="3" ref="1">
    <original>SG</original>
    <variation>RR</variation>
    <location>
        <begin position="9"/>
        <end position="10"/>
    </location>
</feature>
<feature type="sequence conflict" description="In Ref. 1; CAA58136." evidence="3" ref="1">
    <original>A</original>
    <variation>V</variation>
    <location>
        <position position="84"/>
    </location>
</feature>
<proteinExistence type="inferred from homology"/>
<evidence type="ECO:0000255" key="1">
    <source>
        <dbReference type="HAMAP-Rule" id="MF_01307"/>
    </source>
</evidence>
<evidence type="ECO:0000256" key="2">
    <source>
        <dbReference type="SAM" id="MobiDB-lite"/>
    </source>
</evidence>
<evidence type="ECO:0000305" key="3"/>
<dbReference type="EMBL" id="X83011">
    <property type="protein sequence ID" value="CAA58136.1"/>
    <property type="molecule type" value="Genomic_DNA"/>
</dbReference>
<dbReference type="EMBL" id="AL939121">
    <property type="protein sequence ID" value="CAB82087.1"/>
    <property type="molecule type" value="Genomic_DNA"/>
</dbReference>
<dbReference type="PIR" id="S50003">
    <property type="entry name" value="S50003"/>
</dbReference>
<dbReference type="RefSeq" id="NP_628878.1">
    <property type="nucleotide sequence ID" value="NC_003888.3"/>
</dbReference>
<dbReference type="RefSeq" id="WP_003974251.1">
    <property type="nucleotide sequence ID" value="NZ_VNID01000016.1"/>
</dbReference>
<dbReference type="SMR" id="P46790"/>
<dbReference type="FunCoup" id="P46790">
    <property type="interactions" value="434"/>
</dbReference>
<dbReference type="STRING" id="100226.gene:17762368"/>
<dbReference type="PaxDb" id="100226-SCO4719"/>
<dbReference type="GeneID" id="96655939"/>
<dbReference type="KEGG" id="sco:SCO4719"/>
<dbReference type="PATRIC" id="fig|100226.15.peg.4790"/>
<dbReference type="eggNOG" id="COG0098">
    <property type="taxonomic scope" value="Bacteria"/>
</dbReference>
<dbReference type="HOGENOM" id="CLU_065898_1_2_11"/>
<dbReference type="InParanoid" id="P46790"/>
<dbReference type="OrthoDB" id="9809045at2"/>
<dbReference type="PhylomeDB" id="P46790"/>
<dbReference type="Proteomes" id="UP000001973">
    <property type="component" value="Chromosome"/>
</dbReference>
<dbReference type="GO" id="GO:0022627">
    <property type="term" value="C:cytosolic small ribosomal subunit"/>
    <property type="evidence" value="ECO:0000318"/>
    <property type="project" value="GO_Central"/>
</dbReference>
<dbReference type="GO" id="GO:0019843">
    <property type="term" value="F:rRNA binding"/>
    <property type="evidence" value="ECO:0007669"/>
    <property type="project" value="UniProtKB-UniRule"/>
</dbReference>
<dbReference type="GO" id="GO:0003735">
    <property type="term" value="F:structural constituent of ribosome"/>
    <property type="evidence" value="ECO:0000318"/>
    <property type="project" value="GO_Central"/>
</dbReference>
<dbReference type="GO" id="GO:0006412">
    <property type="term" value="P:translation"/>
    <property type="evidence" value="ECO:0000318"/>
    <property type="project" value="GO_Central"/>
</dbReference>
<dbReference type="FunFam" id="3.30.160.20:FF:000001">
    <property type="entry name" value="30S ribosomal protein S5"/>
    <property type="match status" value="1"/>
</dbReference>
<dbReference type="FunFam" id="3.30.230.10:FF:000002">
    <property type="entry name" value="30S ribosomal protein S5"/>
    <property type="match status" value="1"/>
</dbReference>
<dbReference type="Gene3D" id="3.30.160.20">
    <property type="match status" value="1"/>
</dbReference>
<dbReference type="Gene3D" id="3.30.230.10">
    <property type="match status" value="1"/>
</dbReference>
<dbReference type="HAMAP" id="MF_01307_B">
    <property type="entry name" value="Ribosomal_uS5_B"/>
    <property type="match status" value="1"/>
</dbReference>
<dbReference type="InterPro" id="IPR020568">
    <property type="entry name" value="Ribosomal_Su5_D2-typ_SF"/>
</dbReference>
<dbReference type="InterPro" id="IPR000851">
    <property type="entry name" value="Ribosomal_uS5"/>
</dbReference>
<dbReference type="InterPro" id="IPR005712">
    <property type="entry name" value="Ribosomal_uS5_bac-type"/>
</dbReference>
<dbReference type="InterPro" id="IPR005324">
    <property type="entry name" value="Ribosomal_uS5_C"/>
</dbReference>
<dbReference type="InterPro" id="IPR013810">
    <property type="entry name" value="Ribosomal_uS5_N"/>
</dbReference>
<dbReference type="InterPro" id="IPR018192">
    <property type="entry name" value="Ribosomal_uS5_N_CS"/>
</dbReference>
<dbReference type="InterPro" id="IPR014721">
    <property type="entry name" value="Ribsml_uS5_D2-typ_fold_subgr"/>
</dbReference>
<dbReference type="NCBIfam" id="TIGR01021">
    <property type="entry name" value="rpsE_bact"/>
    <property type="match status" value="1"/>
</dbReference>
<dbReference type="PANTHER" id="PTHR48277">
    <property type="entry name" value="MITOCHONDRIAL RIBOSOMAL PROTEIN S5"/>
    <property type="match status" value="1"/>
</dbReference>
<dbReference type="PANTHER" id="PTHR48277:SF1">
    <property type="entry name" value="MITOCHONDRIAL RIBOSOMAL PROTEIN S5"/>
    <property type="match status" value="1"/>
</dbReference>
<dbReference type="Pfam" id="PF00333">
    <property type="entry name" value="Ribosomal_S5"/>
    <property type="match status" value="1"/>
</dbReference>
<dbReference type="Pfam" id="PF03719">
    <property type="entry name" value="Ribosomal_S5_C"/>
    <property type="match status" value="1"/>
</dbReference>
<dbReference type="SUPFAM" id="SSF54768">
    <property type="entry name" value="dsRNA-binding domain-like"/>
    <property type="match status" value="1"/>
</dbReference>
<dbReference type="SUPFAM" id="SSF54211">
    <property type="entry name" value="Ribosomal protein S5 domain 2-like"/>
    <property type="match status" value="1"/>
</dbReference>
<dbReference type="PROSITE" id="PS00585">
    <property type="entry name" value="RIBOSOMAL_S5"/>
    <property type="match status" value="1"/>
</dbReference>
<dbReference type="PROSITE" id="PS50881">
    <property type="entry name" value="S5_DSRBD"/>
    <property type="match status" value="1"/>
</dbReference>
<name>RS5_STRCO</name>
<keyword id="KW-1185">Reference proteome</keyword>
<keyword id="KW-0687">Ribonucleoprotein</keyword>
<keyword id="KW-0689">Ribosomal protein</keyword>
<keyword id="KW-0694">RNA-binding</keyword>
<keyword id="KW-0699">rRNA-binding</keyword>
<organism>
    <name type="scientific">Streptomyces coelicolor (strain ATCC BAA-471 / A3(2) / M145)</name>
    <dbReference type="NCBI Taxonomy" id="100226"/>
    <lineage>
        <taxon>Bacteria</taxon>
        <taxon>Bacillati</taxon>
        <taxon>Actinomycetota</taxon>
        <taxon>Actinomycetes</taxon>
        <taxon>Kitasatosporales</taxon>
        <taxon>Streptomycetaceae</taxon>
        <taxon>Streptomyces</taxon>
        <taxon>Streptomyces albidoflavus group</taxon>
    </lineage>
</organism>